<reference key="1">
    <citation type="journal article" date="2005" name="J. Bacteriol.">
        <title>Whole-genome sequencing of Staphylococcus haemolyticus uncovers the extreme plasticity of its genome and the evolution of human-colonizing staphylococcal species.</title>
        <authorList>
            <person name="Takeuchi F."/>
            <person name="Watanabe S."/>
            <person name="Baba T."/>
            <person name="Yuzawa H."/>
            <person name="Ito T."/>
            <person name="Morimoto Y."/>
            <person name="Kuroda M."/>
            <person name="Cui L."/>
            <person name="Takahashi M."/>
            <person name="Ankai A."/>
            <person name="Baba S."/>
            <person name="Fukui S."/>
            <person name="Lee J.C."/>
            <person name="Hiramatsu K."/>
        </authorList>
    </citation>
    <scope>NUCLEOTIDE SEQUENCE [LARGE SCALE GENOMIC DNA]</scope>
    <source>
        <strain>JCSC1435</strain>
    </source>
</reference>
<evidence type="ECO:0000255" key="1">
    <source>
        <dbReference type="HAMAP-Rule" id="MF_00453"/>
    </source>
</evidence>
<sequence>MSVDTYGETPKIKKLLEKESSLFQLSTTQLYYKIMDNNEGELTELGAINASTGKYTGRSPKDKFIVTEPSYKDNIHWGDINQPIDEETFLNLYSKVLDYLDKKDELYVFNGYAGSDKDTQLKLTVINELAWHNLFAQNMFIRPDSKEEASNIKPNFTIVSAPHFKADPEVDGTKSETFVIISFKHKTILIGGTEYAGEMKKGIFSVMNYLLPMQDIMSMHCSANVGDKGDVALFFGLSGTGKTTLSAAPDRKLIGDDEHGWNKNGIFNIEGGCYAKAINLSKEKEPQIYNAIQYGTILENTVVNERGVVDFDDNSYTENTRAAYPIHHIDNIVLPSKAAHPNTIIFLTADAFGVLPPIAKLTKSQAMYHFLSGFTSKLAGTERGVTEPEPSFSTCFGAPFLPLNPNKYADLLGELIDKHDVDVYLVNTGWTGGKYGVGRRISLHYTRYMVDQAIKGKLKNAEFTKDEKFGLSIPTEMEDVPKTILNPINAWSDSDKYRAQADDLIQRFEENFKKFGPEVEEIANTGGFNK</sequence>
<proteinExistence type="inferred from homology"/>
<organism>
    <name type="scientific">Staphylococcus haemolyticus (strain JCSC1435)</name>
    <dbReference type="NCBI Taxonomy" id="279808"/>
    <lineage>
        <taxon>Bacteria</taxon>
        <taxon>Bacillati</taxon>
        <taxon>Bacillota</taxon>
        <taxon>Bacilli</taxon>
        <taxon>Bacillales</taxon>
        <taxon>Staphylococcaceae</taxon>
        <taxon>Staphylococcus</taxon>
    </lineage>
</organism>
<keyword id="KW-0067">ATP-binding</keyword>
<keyword id="KW-0963">Cytoplasm</keyword>
<keyword id="KW-0210">Decarboxylase</keyword>
<keyword id="KW-0312">Gluconeogenesis</keyword>
<keyword id="KW-0456">Lyase</keyword>
<keyword id="KW-0464">Manganese</keyword>
<keyword id="KW-0479">Metal-binding</keyword>
<keyword id="KW-0547">Nucleotide-binding</keyword>
<protein>
    <recommendedName>
        <fullName evidence="1">Phosphoenolpyruvate carboxykinase (ATP)</fullName>
        <shortName evidence="1">PCK</shortName>
        <shortName evidence="1">PEP carboxykinase</shortName>
        <shortName evidence="1">PEPCK</shortName>
        <ecNumber evidence="1">4.1.1.49</ecNumber>
    </recommendedName>
</protein>
<dbReference type="EC" id="4.1.1.49" evidence="1"/>
<dbReference type="EMBL" id="AP006716">
    <property type="protein sequence ID" value="BAE04446.1"/>
    <property type="molecule type" value="Genomic_DNA"/>
</dbReference>
<dbReference type="RefSeq" id="WP_011275438.1">
    <property type="nucleotide sequence ID" value="NC_007168.1"/>
</dbReference>
<dbReference type="SMR" id="Q4L7C9"/>
<dbReference type="KEGG" id="sha:SH1137"/>
<dbReference type="eggNOG" id="COG1866">
    <property type="taxonomic scope" value="Bacteria"/>
</dbReference>
<dbReference type="HOGENOM" id="CLU_018247_0_1_9"/>
<dbReference type="OrthoDB" id="9806325at2"/>
<dbReference type="UniPathway" id="UPA00138"/>
<dbReference type="Proteomes" id="UP000000543">
    <property type="component" value="Chromosome"/>
</dbReference>
<dbReference type="GO" id="GO:0005829">
    <property type="term" value="C:cytosol"/>
    <property type="evidence" value="ECO:0007669"/>
    <property type="project" value="TreeGrafter"/>
</dbReference>
<dbReference type="GO" id="GO:0005524">
    <property type="term" value="F:ATP binding"/>
    <property type="evidence" value="ECO:0007669"/>
    <property type="project" value="UniProtKB-UniRule"/>
</dbReference>
<dbReference type="GO" id="GO:0046872">
    <property type="term" value="F:metal ion binding"/>
    <property type="evidence" value="ECO:0007669"/>
    <property type="project" value="UniProtKB-KW"/>
</dbReference>
<dbReference type="GO" id="GO:0004612">
    <property type="term" value="F:phosphoenolpyruvate carboxykinase (ATP) activity"/>
    <property type="evidence" value="ECO:0007669"/>
    <property type="project" value="UniProtKB-UniRule"/>
</dbReference>
<dbReference type="GO" id="GO:0006094">
    <property type="term" value="P:gluconeogenesis"/>
    <property type="evidence" value="ECO:0007669"/>
    <property type="project" value="UniProtKB-UniRule"/>
</dbReference>
<dbReference type="CDD" id="cd00484">
    <property type="entry name" value="PEPCK_ATP"/>
    <property type="match status" value="1"/>
</dbReference>
<dbReference type="FunFam" id="2.170.8.10:FF:000001">
    <property type="entry name" value="Phosphoenolpyruvate carboxykinase (ATP)"/>
    <property type="match status" value="1"/>
</dbReference>
<dbReference type="FunFam" id="3.40.449.10:FF:000001">
    <property type="entry name" value="Phosphoenolpyruvate carboxykinase (ATP)"/>
    <property type="match status" value="1"/>
</dbReference>
<dbReference type="Gene3D" id="3.90.228.20">
    <property type="match status" value="1"/>
</dbReference>
<dbReference type="Gene3D" id="3.40.449.10">
    <property type="entry name" value="Phosphoenolpyruvate Carboxykinase, domain 1"/>
    <property type="match status" value="1"/>
</dbReference>
<dbReference type="Gene3D" id="2.170.8.10">
    <property type="entry name" value="Phosphoenolpyruvate Carboxykinase, domain 2"/>
    <property type="match status" value="1"/>
</dbReference>
<dbReference type="HAMAP" id="MF_00453">
    <property type="entry name" value="PEPCK_ATP"/>
    <property type="match status" value="1"/>
</dbReference>
<dbReference type="InterPro" id="IPR001272">
    <property type="entry name" value="PEP_carboxykinase_ATP"/>
</dbReference>
<dbReference type="InterPro" id="IPR013035">
    <property type="entry name" value="PEP_carboxykinase_C"/>
</dbReference>
<dbReference type="InterPro" id="IPR008210">
    <property type="entry name" value="PEP_carboxykinase_N"/>
</dbReference>
<dbReference type="InterPro" id="IPR015994">
    <property type="entry name" value="PEPCK_ATP_CS"/>
</dbReference>
<dbReference type="NCBIfam" id="TIGR00224">
    <property type="entry name" value="pckA"/>
    <property type="match status" value="1"/>
</dbReference>
<dbReference type="NCBIfam" id="NF006820">
    <property type="entry name" value="PRK09344.1-2"/>
    <property type="match status" value="1"/>
</dbReference>
<dbReference type="NCBIfam" id="NF006821">
    <property type="entry name" value="PRK09344.1-3"/>
    <property type="match status" value="1"/>
</dbReference>
<dbReference type="PANTHER" id="PTHR30031:SF0">
    <property type="entry name" value="PHOSPHOENOLPYRUVATE CARBOXYKINASE (ATP)"/>
    <property type="match status" value="1"/>
</dbReference>
<dbReference type="PANTHER" id="PTHR30031">
    <property type="entry name" value="PHOSPHOENOLPYRUVATE CARBOXYKINASE ATP"/>
    <property type="match status" value="1"/>
</dbReference>
<dbReference type="Pfam" id="PF01293">
    <property type="entry name" value="PEPCK_ATP"/>
    <property type="match status" value="1"/>
</dbReference>
<dbReference type="PIRSF" id="PIRSF006294">
    <property type="entry name" value="PEP_crbxkin"/>
    <property type="match status" value="1"/>
</dbReference>
<dbReference type="SUPFAM" id="SSF68923">
    <property type="entry name" value="PEP carboxykinase N-terminal domain"/>
    <property type="match status" value="1"/>
</dbReference>
<dbReference type="SUPFAM" id="SSF53795">
    <property type="entry name" value="PEP carboxykinase-like"/>
    <property type="match status" value="1"/>
</dbReference>
<dbReference type="PROSITE" id="PS00532">
    <property type="entry name" value="PEPCK_ATP"/>
    <property type="match status" value="1"/>
</dbReference>
<feature type="chain" id="PRO_0000236950" description="Phosphoenolpyruvate carboxykinase (ATP)">
    <location>
        <begin position="1"/>
        <end position="530"/>
    </location>
</feature>
<feature type="binding site" evidence="1">
    <location>
        <position position="58"/>
    </location>
    <ligand>
        <name>substrate</name>
    </ligand>
</feature>
<feature type="binding site" evidence="1">
    <location>
        <position position="195"/>
    </location>
    <ligand>
        <name>substrate</name>
    </ligand>
</feature>
<feature type="binding site" evidence="1">
    <location>
        <position position="201"/>
    </location>
    <ligand>
        <name>ATP</name>
        <dbReference type="ChEBI" id="CHEBI:30616"/>
    </ligand>
</feature>
<feature type="binding site" evidence="1">
    <location>
        <position position="201"/>
    </location>
    <ligand>
        <name>Mn(2+)</name>
        <dbReference type="ChEBI" id="CHEBI:29035"/>
    </ligand>
</feature>
<feature type="binding site" evidence="1">
    <location>
        <position position="201"/>
    </location>
    <ligand>
        <name>substrate</name>
    </ligand>
</feature>
<feature type="binding site" evidence="1">
    <location>
        <position position="220"/>
    </location>
    <ligand>
        <name>ATP</name>
        <dbReference type="ChEBI" id="CHEBI:30616"/>
    </ligand>
</feature>
<feature type="binding site" evidence="1">
    <location>
        <position position="220"/>
    </location>
    <ligand>
        <name>Mn(2+)</name>
        <dbReference type="ChEBI" id="CHEBI:29035"/>
    </ligand>
</feature>
<feature type="binding site" evidence="1">
    <location>
        <begin position="236"/>
        <end position="244"/>
    </location>
    <ligand>
        <name>ATP</name>
        <dbReference type="ChEBI" id="CHEBI:30616"/>
    </ligand>
</feature>
<feature type="binding site" evidence="1">
    <location>
        <position position="257"/>
    </location>
    <ligand>
        <name>Mn(2+)</name>
        <dbReference type="ChEBI" id="CHEBI:29035"/>
    </ligand>
</feature>
<feature type="binding site" evidence="1">
    <location>
        <position position="285"/>
    </location>
    <ligand>
        <name>ATP</name>
        <dbReference type="ChEBI" id="CHEBI:30616"/>
    </ligand>
</feature>
<feature type="binding site" evidence="1">
    <location>
        <position position="321"/>
    </location>
    <ligand>
        <name>ATP</name>
        <dbReference type="ChEBI" id="CHEBI:30616"/>
    </ligand>
</feature>
<feature type="binding site" evidence="1">
    <location>
        <position position="321"/>
    </location>
    <ligand>
        <name>substrate</name>
    </ligand>
</feature>
<feature type="binding site" evidence="1">
    <location>
        <begin position="440"/>
        <end position="441"/>
    </location>
    <ligand>
        <name>ATP</name>
        <dbReference type="ChEBI" id="CHEBI:30616"/>
    </ligand>
</feature>
<feature type="binding site" evidence="1">
    <location>
        <position position="446"/>
    </location>
    <ligand>
        <name>ATP</name>
        <dbReference type="ChEBI" id="CHEBI:30616"/>
    </ligand>
</feature>
<comment type="function">
    <text evidence="1">Involved in the gluconeogenesis. Catalyzes the conversion of oxaloacetate (OAA) to phosphoenolpyruvate (PEP) through direct phosphoryl transfer between the nucleoside triphosphate and OAA.</text>
</comment>
<comment type="catalytic activity">
    <reaction evidence="1">
        <text>oxaloacetate + ATP = phosphoenolpyruvate + ADP + CO2</text>
        <dbReference type="Rhea" id="RHEA:18617"/>
        <dbReference type="ChEBI" id="CHEBI:16452"/>
        <dbReference type="ChEBI" id="CHEBI:16526"/>
        <dbReference type="ChEBI" id="CHEBI:30616"/>
        <dbReference type="ChEBI" id="CHEBI:58702"/>
        <dbReference type="ChEBI" id="CHEBI:456216"/>
        <dbReference type="EC" id="4.1.1.49"/>
    </reaction>
</comment>
<comment type="cofactor">
    <cofactor evidence="1">
        <name>Mn(2+)</name>
        <dbReference type="ChEBI" id="CHEBI:29035"/>
    </cofactor>
    <text evidence="1">Binds 1 Mn(2+) ion per subunit.</text>
</comment>
<comment type="pathway">
    <text evidence="1">Carbohydrate biosynthesis; gluconeogenesis.</text>
</comment>
<comment type="subcellular location">
    <subcellularLocation>
        <location evidence="1">Cytoplasm</location>
    </subcellularLocation>
</comment>
<comment type="similarity">
    <text evidence="1">Belongs to the phosphoenolpyruvate carboxykinase (ATP) family.</text>
</comment>
<name>PCKA_STAHJ</name>
<gene>
    <name evidence="1" type="primary">pckA</name>
    <name type="ordered locus">SH1137</name>
</gene>
<accession>Q4L7C9</accession>